<sequence>MLQPSPPHYSSSRDVRHHHHHHHHHHHLALSSKARVFPLSLPCNFSSRVSFKLQLHCAASSSSSVSPPRCSKPNPSSRKRKYGGVIPSILRSLDSSTDIETTLASLCLNLSPKEQTVLLKEQTRWERVLRVFRFFQSHQSYVPNVIHYNIVLRALGRAGKWDELRLCWIEMAHNGVLPTNNTYGMLVDVYGKAGLVKEALLWIKHMGQRMHFPDEVTMATVVRVFKNSGEFDRADRFFKGWCAGKVDLDLDSIDDFPKNGSAQSPVNLKQFLSMELFKVGARNPIEKSLHFASGSDSSPRKPRLTSTFNTLIDLYGKAGRLNDAANLFSEMLKSGVPIDTVTFNTMIHTCGTHGHLSEAESLLKKMEEKGISPDTKTYNILLSLHADAGDIEAALEYYRKIRKVGLFPDTVTHRAVLHILCQRKMVAEVEAVIAEMDRNSIRIDEHSVPVIMQMYVNEGLVVQAKALFERFQLDCVLSSTTLAAVIDVYAEKGLWVEAETVFYGKRNMSGQRNDVLEYNVMIKAYGKAKLHEKALSLFKGMKNQGTWPDECTYNSLFQMLAGVDLVDEAQRILAEMLDSGCKPGCKTYAAMIASYVRLGLLSDAVDLYEAMEKTGVKPNEVVYGSLINGFAESGMVEEAIQYFRMMEEHGVQSNHIVLTSLIKAYSKVGCLEEARRVYDKMKDSEGGPDVAASNSMLSLCADLGIVSEAESIFNALREKGTCDVISFATMMYLYKGMGMLDEAIEVAEEMRESGLLSDCTSFNQVMACYAADGQLSECCELFHEMLVERKLLLDWGTFKTLFTLLKKGGVPSEAVSQLQTAYNEAKPLATPAITATLFSAMGLYAYALESCQELTSGEIPREHFAYNAVIYTYSASGDIDMALKAYMRMQEKGLEPDIVTQAYLVGIYGKAGMVEGVKRVHSRLTFGELEPSQSLFKAVRDAYVSANRQDLADVVKKEMSIAFEAERECSSRSGEEEEDDEEENSEEDEAF</sequence>
<keyword id="KW-1185">Reference proteome</keyword>
<keyword id="KW-0677">Repeat</keyword>
<evidence type="ECO:0000256" key="1">
    <source>
        <dbReference type="SAM" id="MobiDB-lite"/>
    </source>
</evidence>
<evidence type="ECO:0000305" key="2"/>
<accession>Q9C9U0</accession>
<protein>
    <recommendedName>
        <fullName>Pentatricopeptide repeat-containing protein At1g73710</fullName>
    </recommendedName>
</protein>
<organism>
    <name type="scientific">Arabidopsis thaliana</name>
    <name type="common">Mouse-ear cress</name>
    <dbReference type="NCBI Taxonomy" id="3702"/>
    <lineage>
        <taxon>Eukaryota</taxon>
        <taxon>Viridiplantae</taxon>
        <taxon>Streptophyta</taxon>
        <taxon>Embryophyta</taxon>
        <taxon>Tracheophyta</taxon>
        <taxon>Spermatophyta</taxon>
        <taxon>Magnoliopsida</taxon>
        <taxon>eudicotyledons</taxon>
        <taxon>Gunneridae</taxon>
        <taxon>Pentapetalae</taxon>
        <taxon>rosids</taxon>
        <taxon>malvids</taxon>
        <taxon>Brassicales</taxon>
        <taxon>Brassicaceae</taxon>
        <taxon>Camelineae</taxon>
        <taxon>Arabidopsis</taxon>
    </lineage>
</organism>
<dbReference type="EMBL" id="AC012679">
    <property type="protein sequence ID" value="AAG52063.1"/>
    <property type="molecule type" value="Genomic_DNA"/>
</dbReference>
<dbReference type="EMBL" id="CP002684">
    <property type="protein sequence ID" value="AEE35500.1"/>
    <property type="molecule type" value="Genomic_DNA"/>
</dbReference>
<dbReference type="PIR" id="C96764">
    <property type="entry name" value="C96764"/>
</dbReference>
<dbReference type="RefSeq" id="NP_177512.1">
    <property type="nucleotide sequence ID" value="NM_106030.2"/>
</dbReference>
<dbReference type="SMR" id="Q9C9U0"/>
<dbReference type="FunCoup" id="Q9C9U0">
    <property type="interactions" value="1411"/>
</dbReference>
<dbReference type="GlyGen" id="Q9C9U0">
    <property type="glycosylation" value="1 site"/>
</dbReference>
<dbReference type="PaxDb" id="3702-AT1G73710.1"/>
<dbReference type="ProteomicsDB" id="249063"/>
<dbReference type="EnsemblPlants" id="AT1G73710.1">
    <property type="protein sequence ID" value="AT1G73710.1"/>
    <property type="gene ID" value="AT1G73710"/>
</dbReference>
<dbReference type="GeneID" id="843706"/>
<dbReference type="Gramene" id="AT1G73710.1">
    <property type="protein sequence ID" value="AT1G73710.1"/>
    <property type="gene ID" value="AT1G73710"/>
</dbReference>
<dbReference type="KEGG" id="ath:AT1G73710"/>
<dbReference type="Araport" id="AT1G73710"/>
<dbReference type="TAIR" id="AT1G73710"/>
<dbReference type="eggNOG" id="KOG4197">
    <property type="taxonomic scope" value="Eukaryota"/>
</dbReference>
<dbReference type="HOGENOM" id="CLU_011648_0_0_1"/>
<dbReference type="InParanoid" id="Q9C9U0"/>
<dbReference type="OMA" id="LPVVMKM"/>
<dbReference type="PhylomeDB" id="Q9C9U0"/>
<dbReference type="PRO" id="PR:Q9C9U0"/>
<dbReference type="Proteomes" id="UP000006548">
    <property type="component" value="Chromosome 1"/>
</dbReference>
<dbReference type="ExpressionAtlas" id="Q9C9U0">
    <property type="expression patterns" value="baseline and differential"/>
</dbReference>
<dbReference type="Gene3D" id="1.25.40.10">
    <property type="entry name" value="Tetratricopeptide repeat domain"/>
    <property type="match status" value="6"/>
</dbReference>
<dbReference type="InterPro" id="IPR002885">
    <property type="entry name" value="Pentatricopeptide_rpt"/>
</dbReference>
<dbReference type="InterPro" id="IPR050872">
    <property type="entry name" value="PPR_P_subfamily"/>
</dbReference>
<dbReference type="InterPro" id="IPR011990">
    <property type="entry name" value="TPR-like_helical_dom_sf"/>
</dbReference>
<dbReference type="NCBIfam" id="TIGR00756">
    <property type="entry name" value="PPR"/>
    <property type="match status" value="12"/>
</dbReference>
<dbReference type="PANTHER" id="PTHR46128">
    <property type="entry name" value="MITOCHONDRIAL GROUP I INTRON SPLICING FACTOR CCM1"/>
    <property type="match status" value="1"/>
</dbReference>
<dbReference type="PANTHER" id="PTHR46128:SF212">
    <property type="entry name" value="PENTATRICOPEPTIDE REPEAT-CONTAINING PROTEIN"/>
    <property type="match status" value="1"/>
</dbReference>
<dbReference type="Pfam" id="PF01535">
    <property type="entry name" value="PPR"/>
    <property type="match status" value="5"/>
</dbReference>
<dbReference type="Pfam" id="PF13041">
    <property type="entry name" value="PPR_2"/>
    <property type="match status" value="5"/>
</dbReference>
<dbReference type="SUPFAM" id="SSF48452">
    <property type="entry name" value="TPR-like"/>
    <property type="match status" value="1"/>
</dbReference>
<dbReference type="PROSITE" id="PS51375">
    <property type="entry name" value="PPR"/>
    <property type="match status" value="19"/>
</dbReference>
<gene>
    <name type="ordered locus">At1g73710</name>
    <name type="ORF">F25P22.13</name>
</gene>
<feature type="chain" id="PRO_0000342859" description="Pentatricopeptide repeat-containing protein At1g73710">
    <location>
        <begin position="1"/>
        <end position="991"/>
    </location>
</feature>
<feature type="repeat" description="PPR 1">
    <location>
        <begin position="144"/>
        <end position="178"/>
    </location>
</feature>
<feature type="repeat" description="PPR 2">
    <location>
        <begin position="179"/>
        <end position="213"/>
    </location>
</feature>
<feature type="repeat" description="PPR 3">
    <location>
        <begin position="214"/>
        <end position="248"/>
    </location>
</feature>
<feature type="repeat" description="PPR 4">
    <location>
        <begin position="304"/>
        <end position="338"/>
    </location>
</feature>
<feature type="repeat" description="PPR 5">
    <location>
        <begin position="339"/>
        <end position="373"/>
    </location>
</feature>
<feature type="repeat" description="PPR 6">
    <location>
        <begin position="374"/>
        <end position="408"/>
    </location>
</feature>
<feature type="repeat" description="PPR 7">
    <location>
        <begin position="409"/>
        <end position="443"/>
    </location>
</feature>
<feature type="repeat" description="PPR 8">
    <location>
        <begin position="444"/>
        <end position="474"/>
    </location>
</feature>
<feature type="repeat" description="PPR 9">
    <location>
        <begin position="478"/>
        <end position="513"/>
    </location>
</feature>
<feature type="repeat" description="PPR 10">
    <location>
        <begin position="514"/>
        <end position="548"/>
    </location>
</feature>
<feature type="repeat" description="PPR 11">
    <location>
        <begin position="549"/>
        <end position="583"/>
    </location>
</feature>
<feature type="repeat" description="PPR 12">
    <location>
        <begin position="584"/>
        <end position="618"/>
    </location>
</feature>
<feature type="repeat" description="PPR 13">
    <location>
        <begin position="619"/>
        <end position="653"/>
    </location>
</feature>
<feature type="repeat" description="PPR 14">
    <location>
        <begin position="654"/>
        <end position="688"/>
    </location>
</feature>
<feature type="repeat" description="PPR 15">
    <location>
        <begin position="689"/>
        <end position="719"/>
    </location>
</feature>
<feature type="repeat" description="PPR 16">
    <location>
        <begin position="723"/>
        <end position="757"/>
    </location>
</feature>
<feature type="repeat" description="PPR 17">
    <location>
        <begin position="758"/>
        <end position="792"/>
    </location>
</feature>
<feature type="repeat" description="PPR 18">
    <location>
        <begin position="862"/>
        <end position="896"/>
    </location>
</feature>
<feature type="repeat" description="PPR 19">
    <location>
        <begin position="897"/>
        <end position="931"/>
    </location>
</feature>
<feature type="region of interest" description="Disordered" evidence="1">
    <location>
        <begin position="1"/>
        <end position="27"/>
    </location>
</feature>
<feature type="region of interest" description="Disordered" evidence="1">
    <location>
        <begin position="61"/>
        <end position="81"/>
    </location>
</feature>
<feature type="region of interest" description="Disordered" evidence="1">
    <location>
        <begin position="965"/>
        <end position="991"/>
    </location>
</feature>
<feature type="compositionally biased region" description="Basic residues" evidence="1">
    <location>
        <begin position="15"/>
        <end position="27"/>
    </location>
</feature>
<feature type="compositionally biased region" description="Low complexity" evidence="1">
    <location>
        <begin position="61"/>
        <end position="73"/>
    </location>
</feature>
<feature type="compositionally biased region" description="Basic and acidic residues" evidence="1">
    <location>
        <begin position="965"/>
        <end position="974"/>
    </location>
</feature>
<feature type="compositionally biased region" description="Acidic residues" evidence="1">
    <location>
        <begin position="975"/>
        <end position="991"/>
    </location>
</feature>
<name>PP118_ARATH</name>
<comment type="similarity">
    <text evidence="2">Belongs to the PPR family. P subfamily.</text>
</comment>
<comment type="online information" name="Pentatricopeptide repeat proteins">
    <link uri="https://ppr.plantenergy.uwa.edu.au"/>
</comment>
<reference key="1">
    <citation type="journal article" date="2000" name="Nature">
        <title>Sequence and analysis of chromosome 1 of the plant Arabidopsis thaliana.</title>
        <authorList>
            <person name="Theologis A."/>
            <person name="Ecker J.R."/>
            <person name="Palm C.J."/>
            <person name="Federspiel N.A."/>
            <person name="Kaul S."/>
            <person name="White O."/>
            <person name="Alonso J."/>
            <person name="Altafi H."/>
            <person name="Araujo R."/>
            <person name="Bowman C.L."/>
            <person name="Brooks S.Y."/>
            <person name="Buehler E."/>
            <person name="Chan A."/>
            <person name="Chao Q."/>
            <person name="Chen H."/>
            <person name="Cheuk R.F."/>
            <person name="Chin C.W."/>
            <person name="Chung M.K."/>
            <person name="Conn L."/>
            <person name="Conway A.B."/>
            <person name="Conway A.R."/>
            <person name="Creasy T.H."/>
            <person name="Dewar K."/>
            <person name="Dunn P."/>
            <person name="Etgu P."/>
            <person name="Feldblyum T.V."/>
            <person name="Feng J.-D."/>
            <person name="Fong B."/>
            <person name="Fujii C.Y."/>
            <person name="Gill J.E."/>
            <person name="Goldsmith A.D."/>
            <person name="Haas B."/>
            <person name="Hansen N.F."/>
            <person name="Hughes B."/>
            <person name="Huizar L."/>
            <person name="Hunter J.L."/>
            <person name="Jenkins J."/>
            <person name="Johnson-Hopson C."/>
            <person name="Khan S."/>
            <person name="Khaykin E."/>
            <person name="Kim C.J."/>
            <person name="Koo H.L."/>
            <person name="Kremenetskaia I."/>
            <person name="Kurtz D.B."/>
            <person name="Kwan A."/>
            <person name="Lam B."/>
            <person name="Langin-Hooper S."/>
            <person name="Lee A."/>
            <person name="Lee J.M."/>
            <person name="Lenz C.A."/>
            <person name="Li J.H."/>
            <person name="Li Y.-P."/>
            <person name="Lin X."/>
            <person name="Liu S.X."/>
            <person name="Liu Z.A."/>
            <person name="Luros J.S."/>
            <person name="Maiti R."/>
            <person name="Marziali A."/>
            <person name="Militscher J."/>
            <person name="Miranda M."/>
            <person name="Nguyen M."/>
            <person name="Nierman W.C."/>
            <person name="Osborne B.I."/>
            <person name="Pai G."/>
            <person name="Peterson J."/>
            <person name="Pham P.K."/>
            <person name="Rizzo M."/>
            <person name="Rooney T."/>
            <person name="Rowley D."/>
            <person name="Sakano H."/>
            <person name="Salzberg S.L."/>
            <person name="Schwartz J.R."/>
            <person name="Shinn P."/>
            <person name="Southwick A.M."/>
            <person name="Sun H."/>
            <person name="Tallon L.J."/>
            <person name="Tambunga G."/>
            <person name="Toriumi M.J."/>
            <person name="Town C.D."/>
            <person name="Utterback T."/>
            <person name="Van Aken S."/>
            <person name="Vaysberg M."/>
            <person name="Vysotskaia V.S."/>
            <person name="Walker M."/>
            <person name="Wu D."/>
            <person name="Yu G."/>
            <person name="Fraser C.M."/>
            <person name="Venter J.C."/>
            <person name="Davis R.W."/>
        </authorList>
    </citation>
    <scope>NUCLEOTIDE SEQUENCE [LARGE SCALE GENOMIC DNA]</scope>
    <source>
        <strain>cv. Columbia</strain>
    </source>
</reference>
<reference key="2">
    <citation type="journal article" date="2017" name="Plant J.">
        <title>Araport11: a complete reannotation of the Arabidopsis thaliana reference genome.</title>
        <authorList>
            <person name="Cheng C.Y."/>
            <person name="Krishnakumar V."/>
            <person name="Chan A.P."/>
            <person name="Thibaud-Nissen F."/>
            <person name="Schobel S."/>
            <person name="Town C.D."/>
        </authorList>
    </citation>
    <scope>GENOME REANNOTATION</scope>
    <source>
        <strain>cv. Columbia</strain>
    </source>
</reference>
<reference key="3">
    <citation type="journal article" date="2004" name="Plant Cell">
        <title>Genome-wide analysis of Arabidopsis pentatricopeptide repeat proteins reveals their essential role in organelle biogenesis.</title>
        <authorList>
            <person name="Lurin C."/>
            <person name="Andres C."/>
            <person name="Aubourg S."/>
            <person name="Bellaoui M."/>
            <person name="Bitton F."/>
            <person name="Bruyere C."/>
            <person name="Caboche M."/>
            <person name="Debast C."/>
            <person name="Gualberto J."/>
            <person name="Hoffmann B."/>
            <person name="Lecharny A."/>
            <person name="Le Ret M."/>
            <person name="Martin-Magniette M.-L."/>
            <person name="Mireau H."/>
            <person name="Peeters N."/>
            <person name="Renou J.-P."/>
            <person name="Szurek B."/>
            <person name="Taconnat L."/>
            <person name="Small I."/>
        </authorList>
    </citation>
    <scope>GENE FAMILY</scope>
</reference>
<proteinExistence type="evidence at transcript level"/>